<accession>O50305</accession>
<accession>Q9KFC3</accession>
<proteinExistence type="evidence at transcript level"/>
<protein>
    <recommendedName>
        <fullName evidence="1">Chaperonin GroEL</fullName>
        <ecNumber evidence="1">5.6.1.7</ecNumber>
    </recommendedName>
    <alternativeName>
        <fullName evidence="1">60 kDa chaperonin</fullName>
    </alternativeName>
    <alternativeName>
        <fullName evidence="1">Chaperonin-60</fullName>
        <shortName evidence="1">Cpn60</shortName>
    </alternativeName>
</protein>
<organism>
    <name type="scientific">Halalkalibacterium halodurans (strain ATCC BAA-125 / DSM 18197 / FERM 7344 / JCM 9153 / C-125)</name>
    <name type="common">Bacillus halodurans</name>
    <dbReference type="NCBI Taxonomy" id="272558"/>
    <lineage>
        <taxon>Bacteria</taxon>
        <taxon>Bacillati</taxon>
        <taxon>Bacillota</taxon>
        <taxon>Bacilli</taxon>
        <taxon>Bacillales</taxon>
        <taxon>Bacillaceae</taxon>
        <taxon>Halalkalibacterium (ex Joshi et al. 2022)</taxon>
    </lineage>
</organism>
<keyword id="KW-0067">ATP-binding</keyword>
<keyword id="KW-0143">Chaperone</keyword>
<keyword id="KW-0963">Cytoplasm</keyword>
<keyword id="KW-0413">Isomerase</keyword>
<keyword id="KW-0547">Nucleotide-binding</keyword>
<keyword id="KW-1185">Reference proteome</keyword>
<keyword id="KW-0346">Stress response</keyword>
<name>CH60_HALH5</name>
<reference key="1">
    <citation type="journal article" date="1996" name="Biosci. Biotechnol. Biochem.">
        <title>Molecular cloning and nucleotide sequence of the groEL gene from the alkaliphilic Bacillus sp. strain C-125 and reactivation of thermally inactivated alpha-glucosidase by recombinant GroEL.</title>
        <authorList>
            <person name="Xu Y."/>
            <person name="Kobayashi T."/>
            <person name="Kudo T."/>
        </authorList>
    </citation>
    <scope>NUCLEOTIDE SEQUENCE [GENOMIC DNA]</scope>
    <source>
        <strain>ATCC BAA-125 / DSM 18197 / FERM 7344 / JCM 9153 / C-125</strain>
    </source>
</reference>
<reference key="2">
    <citation type="journal article" date="2000" name="Nucleic Acids Res.">
        <title>Complete genome sequence of the alkaliphilic bacterium Bacillus halodurans and genomic sequence comparison with Bacillus subtilis.</title>
        <authorList>
            <person name="Takami H."/>
            <person name="Nakasone K."/>
            <person name="Takaki Y."/>
            <person name="Maeno G."/>
            <person name="Sasaki R."/>
            <person name="Masui N."/>
            <person name="Fuji F."/>
            <person name="Hirama C."/>
            <person name="Nakamura Y."/>
            <person name="Ogasawara N."/>
            <person name="Kuhara S."/>
            <person name="Horikoshi K."/>
        </authorList>
    </citation>
    <scope>NUCLEOTIDE SEQUENCE [LARGE SCALE GENOMIC DNA]</scope>
    <source>
        <strain>ATCC BAA-125 / DSM 18197 / FERM 7344 / JCM 9153 / C-125</strain>
    </source>
</reference>
<comment type="function">
    <text evidence="1">Together with its co-chaperonin GroES, plays an essential role in assisting protein folding. The GroEL-GroES system forms a nano-cage that allows encapsulation of the non-native substrate proteins and provides a physical environment optimized to promote and accelerate protein folding.</text>
</comment>
<comment type="catalytic activity">
    <reaction evidence="1">
        <text>ATP + H2O + a folded polypeptide = ADP + phosphate + an unfolded polypeptide.</text>
        <dbReference type="EC" id="5.6.1.7"/>
    </reaction>
</comment>
<comment type="subunit">
    <text evidence="1">Forms a cylinder of 14 subunits composed of two heptameric rings stacked back-to-back. Interacts with the co-chaperonin GroES.</text>
</comment>
<comment type="subcellular location">
    <subcellularLocation>
        <location evidence="1">Cytoplasm</location>
    </subcellularLocation>
</comment>
<comment type="induction">
    <text>By heat shock.</text>
</comment>
<comment type="similarity">
    <text evidence="1">Belongs to the chaperonin (HSP60) family.</text>
</comment>
<gene>
    <name evidence="1" type="primary">groEL</name>
    <name evidence="1" type="synonym">groL</name>
    <name type="synonym">mopA</name>
    <name type="ordered locus">BH0562</name>
</gene>
<sequence>MAKDIKFSEDARRSMLRGVDKLADAVKVTLGPKGRNVVLEKKFGSPLITNDGVTIAKEIELEDAFENMGAKLVAEVASKTNDIAGDGTTTATVLAQAMIREGLKNVTSGANPMVIRKGIEKATQVAVEELSKISKPIEGKDSIAQVAAISSADDEVGKIIAEAMERVGNDGVITIEESKGFSTELEVVEGMQFDRGYASPYMVTDSDKMEAVLDNPYVLITDKKISNIQEVLPVLEQVVQQGKPILIIAEDVEGEALATLVVNKLRGTFNAVAVKAPGFGDRRKAMLEDIAILTGGEVITEDLGLDLKSANITQLGRASKVVVTKENTTIVEGAGESDKIAARVNQIKAQIEETTSDFDKEKLQERLAKLAGGVAVLKVGAATETEMKERKLRIEDALNSTRAAVEEGIVAGGGTALVNVIKAVSSIGAEGDEATGVNIVLRALEEPVRQIAHNAGLEGSVIVERLKKEEAGFGFNAATGEWVNMVEAGIVDPTKVTRSALQHAASVSAMFLTTEAVIADKPEENEGGGGMPDMGGMGGMGGMM</sequence>
<feature type="chain" id="PRO_0000063273" description="Chaperonin GroEL">
    <location>
        <begin position="1"/>
        <end position="544"/>
    </location>
</feature>
<feature type="binding site" evidence="1">
    <location>
        <begin position="29"/>
        <end position="32"/>
    </location>
    <ligand>
        <name>ATP</name>
        <dbReference type="ChEBI" id="CHEBI:30616"/>
    </ligand>
</feature>
<feature type="binding site" evidence="1">
    <location>
        <begin position="86"/>
        <end position="90"/>
    </location>
    <ligand>
        <name>ATP</name>
        <dbReference type="ChEBI" id="CHEBI:30616"/>
    </ligand>
</feature>
<feature type="binding site" evidence="1">
    <location>
        <position position="413"/>
    </location>
    <ligand>
        <name>ATP</name>
        <dbReference type="ChEBI" id="CHEBI:30616"/>
    </ligand>
</feature>
<feature type="binding site" evidence="1">
    <location>
        <begin position="476"/>
        <end position="478"/>
    </location>
    <ligand>
        <name>ATP</name>
        <dbReference type="ChEBI" id="CHEBI:30616"/>
    </ligand>
</feature>
<feature type="binding site" evidence="1">
    <location>
        <position position="492"/>
    </location>
    <ligand>
        <name>ATP</name>
        <dbReference type="ChEBI" id="CHEBI:30616"/>
    </ligand>
</feature>
<feature type="sequence conflict" description="In Ref. 1; BAA09494." evidence="2" ref="1">
    <original>E</original>
    <variation>VK</variation>
    <location>
        <position position="407"/>
    </location>
</feature>
<feature type="sequence conflict" description="In Ref. 1; BAA09494." evidence="2" ref="1">
    <location>
        <position position="421"/>
    </location>
</feature>
<feature type="sequence conflict" description="In Ref. 1; BAA09494." evidence="2" ref="1">
    <original>A</original>
    <variation>VP</variation>
    <location>
        <position position="500"/>
    </location>
</feature>
<feature type="sequence conflict" description="In Ref. 1; BAA09494." evidence="2" ref="1">
    <location>
        <position position="512"/>
    </location>
</feature>
<evidence type="ECO:0000255" key="1">
    <source>
        <dbReference type="HAMAP-Rule" id="MF_00600"/>
    </source>
</evidence>
<evidence type="ECO:0000305" key="2"/>
<dbReference type="EC" id="5.6.1.7" evidence="1"/>
<dbReference type="EMBL" id="D55630">
    <property type="protein sequence ID" value="BAA09494.1"/>
    <property type="molecule type" value="Genomic_DNA"/>
</dbReference>
<dbReference type="EMBL" id="BA000004">
    <property type="protein sequence ID" value="BAB04281.1"/>
    <property type="molecule type" value="Genomic_DNA"/>
</dbReference>
<dbReference type="PIR" id="B83720">
    <property type="entry name" value="B83720"/>
</dbReference>
<dbReference type="PIR" id="JC5130">
    <property type="entry name" value="JC5130"/>
</dbReference>
<dbReference type="RefSeq" id="WP_010896739.1">
    <property type="nucleotide sequence ID" value="NC_002570.2"/>
</dbReference>
<dbReference type="SMR" id="O50305"/>
<dbReference type="STRING" id="272558.gene:10726431"/>
<dbReference type="KEGG" id="bha:BH0562"/>
<dbReference type="eggNOG" id="COG0459">
    <property type="taxonomic scope" value="Bacteria"/>
</dbReference>
<dbReference type="HOGENOM" id="CLU_016503_3_0_9"/>
<dbReference type="OrthoDB" id="9766614at2"/>
<dbReference type="Proteomes" id="UP000001258">
    <property type="component" value="Chromosome"/>
</dbReference>
<dbReference type="GO" id="GO:0005737">
    <property type="term" value="C:cytoplasm"/>
    <property type="evidence" value="ECO:0007669"/>
    <property type="project" value="UniProtKB-SubCell"/>
</dbReference>
<dbReference type="GO" id="GO:0005524">
    <property type="term" value="F:ATP binding"/>
    <property type="evidence" value="ECO:0007669"/>
    <property type="project" value="UniProtKB-UniRule"/>
</dbReference>
<dbReference type="GO" id="GO:0140662">
    <property type="term" value="F:ATP-dependent protein folding chaperone"/>
    <property type="evidence" value="ECO:0007669"/>
    <property type="project" value="InterPro"/>
</dbReference>
<dbReference type="GO" id="GO:0016853">
    <property type="term" value="F:isomerase activity"/>
    <property type="evidence" value="ECO:0007669"/>
    <property type="project" value="UniProtKB-KW"/>
</dbReference>
<dbReference type="GO" id="GO:0051082">
    <property type="term" value="F:unfolded protein binding"/>
    <property type="evidence" value="ECO:0007669"/>
    <property type="project" value="UniProtKB-UniRule"/>
</dbReference>
<dbReference type="GO" id="GO:0042026">
    <property type="term" value="P:protein refolding"/>
    <property type="evidence" value="ECO:0007669"/>
    <property type="project" value="UniProtKB-UniRule"/>
</dbReference>
<dbReference type="CDD" id="cd03344">
    <property type="entry name" value="GroEL"/>
    <property type="match status" value="1"/>
</dbReference>
<dbReference type="FunFam" id="1.10.560.10:FF:000001">
    <property type="entry name" value="60 kDa chaperonin"/>
    <property type="match status" value="1"/>
</dbReference>
<dbReference type="FunFam" id="3.50.7.10:FF:000001">
    <property type="entry name" value="60 kDa chaperonin"/>
    <property type="match status" value="1"/>
</dbReference>
<dbReference type="Gene3D" id="3.50.7.10">
    <property type="entry name" value="GroEL"/>
    <property type="match status" value="1"/>
</dbReference>
<dbReference type="Gene3D" id="1.10.560.10">
    <property type="entry name" value="GroEL-like equatorial domain"/>
    <property type="match status" value="1"/>
</dbReference>
<dbReference type="Gene3D" id="3.30.260.10">
    <property type="entry name" value="TCP-1-like chaperonin intermediate domain"/>
    <property type="match status" value="1"/>
</dbReference>
<dbReference type="HAMAP" id="MF_00600">
    <property type="entry name" value="CH60"/>
    <property type="match status" value="1"/>
</dbReference>
<dbReference type="InterPro" id="IPR018370">
    <property type="entry name" value="Chaperonin_Cpn60_CS"/>
</dbReference>
<dbReference type="InterPro" id="IPR001844">
    <property type="entry name" value="Cpn60/GroEL"/>
</dbReference>
<dbReference type="InterPro" id="IPR002423">
    <property type="entry name" value="Cpn60/GroEL/TCP-1"/>
</dbReference>
<dbReference type="InterPro" id="IPR027409">
    <property type="entry name" value="GroEL-like_apical_dom_sf"/>
</dbReference>
<dbReference type="InterPro" id="IPR027413">
    <property type="entry name" value="GROEL-like_equatorial_sf"/>
</dbReference>
<dbReference type="InterPro" id="IPR027410">
    <property type="entry name" value="TCP-1-like_intermed_sf"/>
</dbReference>
<dbReference type="NCBIfam" id="TIGR02348">
    <property type="entry name" value="GroEL"/>
    <property type="match status" value="1"/>
</dbReference>
<dbReference type="NCBIfam" id="NF000592">
    <property type="entry name" value="PRK00013.1"/>
    <property type="match status" value="1"/>
</dbReference>
<dbReference type="NCBIfam" id="NF009487">
    <property type="entry name" value="PRK12849.1"/>
    <property type="match status" value="1"/>
</dbReference>
<dbReference type="NCBIfam" id="NF009488">
    <property type="entry name" value="PRK12850.1"/>
    <property type="match status" value="1"/>
</dbReference>
<dbReference type="NCBIfam" id="NF009489">
    <property type="entry name" value="PRK12851.1"/>
    <property type="match status" value="1"/>
</dbReference>
<dbReference type="PANTHER" id="PTHR45633">
    <property type="entry name" value="60 KDA HEAT SHOCK PROTEIN, MITOCHONDRIAL"/>
    <property type="match status" value="1"/>
</dbReference>
<dbReference type="Pfam" id="PF00118">
    <property type="entry name" value="Cpn60_TCP1"/>
    <property type="match status" value="1"/>
</dbReference>
<dbReference type="PRINTS" id="PR00298">
    <property type="entry name" value="CHAPERONIN60"/>
</dbReference>
<dbReference type="SUPFAM" id="SSF52029">
    <property type="entry name" value="GroEL apical domain-like"/>
    <property type="match status" value="1"/>
</dbReference>
<dbReference type="SUPFAM" id="SSF48592">
    <property type="entry name" value="GroEL equatorial domain-like"/>
    <property type="match status" value="1"/>
</dbReference>
<dbReference type="SUPFAM" id="SSF54849">
    <property type="entry name" value="GroEL-intermediate domain like"/>
    <property type="match status" value="1"/>
</dbReference>
<dbReference type="PROSITE" id="PS00296">
    <property type="entry name" value="CHAPERONINS_CPN60"/>
    <property type="match status" value="1"/>
</dbReference>